<protein>
    <recommendedName>
        <fullName evidence="1">Pantothenate synthetase</fullName>
        <shortName evidence="1">PS</shortName>
        <ecNumber evidence="1">6.3.2.1</ecNumber>
    </recommendedName>
    <alternativeName>
        <fullName evidence="1">Pantoate--beta-alanine ligase</fullName>
    </alternativeName>
    <alternativeName>
        <fullName evidence="1">Pantoate-activating enzyme</fullName>
    </alternativeName>
</protein>
<keyword id="KW-0067">ATP-binding</keyword>
<keyword id="KW-0963">Cytoplasm</keyword>
<keyword id="KW-0436">Ligase</keyword>
<keyword id="KW-0547">Nucleotide-binding</keyword>
<keyword id="KW-0566">Pantothenate biosynthesis</keyword>
<keyword id="KW-1185">Reference proteome</keyword>
<accession>Q143J2</accession>
<name>PANC_PARXL</name>
<organism>
    <name type="scientific">Paraburkholderia xenovorans (strain LB400)</name>
    <dbReference type="NCBI Taxonomy" id="266265"/>
    <lineage>
        <taxon>Bacteria</taxon>
        <taxon>Pseudomonadati</taxon>
        <taxon>Pseudomonadota</taxon>
        <taxon>Betaproteobacteria</taxon>
        <taxon>Burkholderiales</taxon>
        <taxon>Burkholderiaceae</taxon>
        <taxon>Paraburkholderia</taxon>
    </lineage>
</organism>
<sequence length="277" mass="31132">MKVISSIHELRDQLRGQNRTAFVPTMGNLHEGHLSLMRLARQHGDPVVASIFVNRLQFGPNEDFDKYPRTMEADIEKLQKENVYVLFAPTEKDLYPEPQEYRVHPPHDLGDILEGEFRPGFFQGVCTVVMKLMSCVQPRVAVFGKKDYQQLMIVRRMCNQFALPTDIIAAETVRDADGLALSSRNRYLQAAERAEAPRLAAELNQVREAVLGGERDFAKIERAAMAALAARGWQPDYIAVRKRSNLLPPGPEDANAELVVLAAARLGATRLIDNLEI</sequence>
<feature type="chain" id="PRO_0000305419" description="Pantothenate synthetase">
    <location>
        <begin position="1"/>
        <end position="277"/>
    </location>
</feature>
<feature type="active site" description="Proton donor" evidence="1">
    <location>
        <position position="33"/>
    </location>
</feature>
<feature type="binding site" evidence="1">
    <location>
        <begin position="26"/>
        <end position="33"/>
    </location>
    <ligand>
        <name>ATP</name>
        <dbReference type="ChEBI" id="CHEBI:30616"/>
    </ligand>
</feature>
<feature type="binding site" evidence="1">
    <location>
        <position position="57"/>
    </location>
    <ligand>
        <name>(R)-pantoate</name>
        <dbReference type="ChEBI" id="CHEBI:15980"/>
    </ligand>
</feature>
<feature type="binding site" evidence="1">
    <location>
        <position position="57"/>
    </location>
    <ligand>
        <name>beta-alanine</name>
        <dbReference type="ChEBI" id="CHEBI:57966"/>
    </ligand>
</feature>
<feature type="binding site" evidence="1">
    <location>
        <begin position="144"/>
        <end position="147"/>
    </location>
    <ligand>
        <name>ATP</name>
        <dbReference type="ChEBI" id="CHEBI:30616"/>
    </ligand>
</feature>
<feature type="binding site" evidence="1">
    <location>
        <position position="150"/>
    </location>
    <ligand>
        <name>(R)-pantoate</name>
        <dbReference type="ChEBI" id="CHEBI:15980"/>
    </ligand>
</feature>
<feature type="binding site" evidence="1">
    <location>
        <position position="173"/>
    </location>
    <ligand>
        <name>ATP</name>
        <dbReference type="ChEBI" id="CHEBI:30616"/>
    </ligand>
</feature>
<feature type="binding site" evidence="1">
    <location>
        <begin position="181"/>
        <end position="184"/>
    </location>
    <ligand>
        <name>ATP</name>
        <dbReference type="ChEBI" id="CHEBI:30616"/>
    </ligand>
</feature>
<dbReference type="EC" id="6.3.2.1" evidence="1"/>
<dbReference type="EMBL" id="CP000270">
    <property type="protein sequence ID" value="ABE29497.1"/>
    <property type="molecule type" value="Genomic_DNA"/>
</dbReference>
<dbReference type="RefSeq" id="WP_011487256.1">
    <property type="nucleotide sequence ID" value="NC_007951.1"/>
</dbReference>
<dbReference type="SMR" id="Q143J2"/>
<dbReference type="STRING" id="266265.Bxe_A3488"/>
<dbReference type="KEGG" id="bxb:DR64_1191"/>
<dbReference type="KEGG" id="bxe:Bxe_A3488"/>
<dbReference type="PATRIC" id="fig|266265.5.peg.977"/>
<dbReference type="eggNOG" id="COG0414">
    <property type="taxonomic scope" value="Bacteria"/>
</dbReference>
<dbReference type="OrthoDB" id="9773087at2"/>
<dbReference type="UniPathway" id="UPA00028">
    <property type="reaction ID" value="UER00005"/>
</dbReference>
<dbReference type="Proteomes" id="UP000001817">
    <property type="component" value="Chromosome 1"/>
</dbReference>
<dbReference type="GO" id="GO:0005829">
    <property type="term" value="C:cytosol"/>
    <property type="evidence" value="ECO:0007669"/>
    <property type="project" value="TreeGrafter"/>
</dbReference>
<dbReference type="GO" id="GO:0005524">
    <property type="term" value="F:ATP binding"/>
    <property type="evidence" value="ECO:0007669"/>
    <property type="project" value="UniProtKB-KW"/>
</dbReference>
<dbReference type="GO" id="GO:0004592">
    <property type="term" value="F:pantoate-beta-alanine ligase activity"/>
    <property type="evidence" value="ECO:0007669"/>
    <property type="project" value="UniProtKB-UniRule"/>
</dbReference>
<dbReference type="GO" id="GO:0015940">
    <property type="term" value="P:pantothenate biosynthetic process"/>
    <property type="evidence" value="ECO:0007669"/>
    <property type="project" value="UniProtKB-UniRule"/>
</dbReference>
<dbReference type="CDD" id="cd00560">
    <property type="entry name" value="PanC"/>
    <property type="match status" value="1"/>
</dbReference>
<dbReference type="Gene3D" id="3.40.50.620">
    <property type="entry name" value="HUPs"/>
    <property type="match status" value="1"/>
</dbReference>
<dbReference type="Gene3D" id="3.30.1300.10">
    <property type="entry name" value="Pantoate-beta-alanine ligase, C-terminal domain"/>
    <property type="match status" value="1"/>
</dbReference>
<dbReference type="HAMAP" id="MF_00158">
    <property type="entry name" value="PanC"/>
    <property type="match status" value="1"/>
</dbReference>
<dbReference type="InterPro" id="IPR004821">
    <property type="entry name" value="Cyt_trans-like"/>
</dbReference>
<dbReference type="InterPro" id="IPR003721">
    <property type="entry name" value="Pantoate_ligase"/>
</dbReference>
<dbReference type="InterPro" id="IPR042176">
    <property type="entry name" value="Pantoate_ligase_C"/>
</dbReference>
<dbReference type="InterPro" id="IPR014729">
    <property type="entry name" value="Rossmann-like_a/b/a_fold"/>
</dbReference>
<dbReference type="NCBIfam" id="TIGR00125">
    <property type="entry name" value="cyt_tran_rel"/>
    <property type="match status" value="1"/>
</dbReference>
<dbReference type="NCBIfam" id="TIGR00018">
    <property type="entry name" value="panC"/>
    <property type="match status" value="1"/>
</dbReference>
<dbReference type="PANTHER" id="PTHR21299">
    <property type="entry name" value="CYTIDYLATE KINASE/PANTOATE-BETA-ALANINE LIGASE"/>
    <property type="match status" value="1"/>
</dbReference>
<dbReference type="PANTHER" id="PTHR21299:SF1">
    <property type="entry name" value="PANTOATE--BETA-ALANINE LIGASE"/>
    <property type="match status" value="1"/>
</dbReference>
<dbReference type="Pfam" id="PF02569">
    <property type="entry name" value="Pantoate_ligase"/>
    <property type="match status" value="1"/>
</dbReference>
<dbReference type="SUPFAM" id="SSF52374">
    <property type="entry name" value="Nucleotidylyl transferase"/>
    <property type="match status" value="1"/>
</dbReference>
<evidence type="ECO:0000255" key="1">
    <source>
        <dbReference type="HAMAP-Rule" id="MF_00158"/>
    </source>
</evidence>
<reference key="1">
    <citation type="journal article" date="2006" name="Proc. Natl. Acad. Sci. U.S.A.">
        <title>Burkholderia xenovorans LB400 harbors a multi-replicon, 9.73-Mbp genome shaped for versatility.</title>
        <authorList>
            <person name="Chain P.S.G."/>
            <person name="Denef V.J."/>
            <person name="Konstantinidis K.T."/>
            <person name="Vergez L.M."/>
            <person name="Agullo L."/>
            <person name="Reyes V.L."/>
            <person name="Hauser L."/>
            <person name="Cordova M."/>
            <person name="Gomez L."/>
            <person name="Gonzalez M."/>
            <person name="Land M."/>
            <person name="Lao V."/>
            <person name="Larimer F."/>
            <person name="LiPuma J.J."/>
            <person name="Mahenthiralingam E."/>
            <person name="Malfatti S.A."/>
            <person name="Marx C.J."/>
            <person name="Parnell J.J."/>
            <person name="Ramette A."/>
            <person name="Richardson P."/>
            <person name="Seeger M."/>
            <person name="Smith D."/>
            <person name="Spilker T."/>
            <person name="Sul W.J."/>
            <person name="Tsoi T.V."/>
            <person name="Ulrich L.E."/>
            <person name="Zhulin I.B."/>
            <person name="Tiedje J.M."/>
        </authorList>
    </citation>
    <scope>NUCLEOTIDE SEQUENCE [LARGE SCALE GENOMIC DNA]</scope>
    <source>
        <strain>LB400</strain>
    </source>
</reference>
<proteinExistence type="inferred from homology"/>
<gene>
    <name evidence="1" type="primary">panC</name>
    <name type="ordered locus">Bxeno_A0959</name>
    <name type="ORF">Bxe_A3488</name>
</gene>
<comment type="function">
    <text evidence="1">Catalyzes the condensation of pantoate with beta-alanine in an ATP-dependent reaction via a pantoyl-adenylate intermediate.</text>
</comment>
<comment type="catalytic activity">
    <reaction evidence="1">
        <text>(R)-pantoate + beta-alanine + ATP = (R)-pantothenate + AMP + diphosphate + H(+)</text>
        <dbReference type="Rhea" id="RHEA:10912"/>
        <dbReference type="ChEBI" id="CHEBI:15378"/>
        <dbReference type="ChEBI" id="CHEBI:15980"/>
        <dbReference type="ChEBI" id="CHEBI:29032"/>
        <dbReference type="ChEBI" id="CHEBI:30616"/>
        <dbReference type="ChEBI" id="CHEBI:33019"/>
        <dbReference type="ChEBI" id="CHEBI:57966"/>
        <dbReference type="ChEBI" id="CHEBI:456215"/>
        <dbReference type="EC" id="6.3.2.1"/>
    </reaction>
</comment>
<comment type="pathway">
    <text evidence="1">Cofactor biosynthesis; (R)-pantothenate biosynthesis; (R)-pantothenate from (R)-pantoate and beta-alanine: step 1/1.</text>
</comment>
<comment type="subunit">
    <text evidence="1">Homodimer.</text>
</comment>
<comment type="subcellular location">
    <subcellularLocation>
        <location evidence="1">Cytoplasm</location>
    </subcellularLocation>
</comment>
<comment type="miscellaneous">
    <text evidence="1">The reaction proceeds by a bi uni uni bi ping pong mechanism.</text>
</comment>
<comment type="similarity">
    <text evidence="1">Belongs to the pantothenate synthetase family.</text>
</comment>